<gene>
    <name evidence="1" type="primary">hemA</name>
    <name type="ordered locus">CTL0031</name>
</gene>
<keyword id="KW-0521">NADP</keyword>
<keyword id="KW-0560">Oxidoreductase</keyword>
<keyword id="KW-0627">Porphyrin biosynthesis</keyword>
<accession>B0B8N8</accession>
<protein>
    <recommendedName>
        <fullName evidence="1">Glutamyl-tRNA reductase</fullName>
        <shortName evidence="1">GluTR</shortName>
        <ecNumber evidence="1">1.2.1.70</ecNumber>
    </recommendedName>
</protein>
<sequence length="335" mass="38868">MVREGEERIGNRVLLGVIGVSYRETTLQQREQVLHILQQAQGSFRPEVFQEERDYVLLATCHRVELYSVAPAELFDSLAQEIKLLGVSPYFYRNQDCFAHLFCVAGGLDSLVLGETEIQGQVKRAYLQAAREQKLSFALHFLFQKALKEGKVFRAKGGAPYAAITIPILVDQELRRRQIDKKASLLFIGYSEINRSVAYHLRRQGFSCITFCSRQQLPTLSMRQVVREELCFQDPYRVVFLGSLELQYALPHSLWESIWDIPDRIVFDFAVPRALPSHTVFPHRYMDMDQISDWLREHRKEVNSAHLDSLREVAYRYWNSLNQRLERHDCVGANA</sequence>
<organism>
    <name type="scientific">Chlamydia trachomatis serovar L2 (strain ATCC VR-902B / DSM 19102 / 434/Bu)</name>
    <dbReference type="NCBI Taxonomy" id="471472"/>
    <lineage>
        <taxon>Bacteria</taxon>
        <taxon>Pseudomonadati</taxon>
        <taxon>Chlamydiota</taxon>
        <taxon>Chlamydiia</taxon>
        <taxon>Chlamydiales</taxon>
        <taxon>Chlamydiaceae</taxon>
        <taxon>Chlamydia/Chlamydophila group</taxon>
        <taxon>Chlamydia</taxon>
    </lineage>
</organism>
<proteinExistence type="inferred from homology"/>
<evidence type="ECO:0000255" key="1">
    <source>
        <dbReference type="HAMAP-Rule" id="MF_00087"/>
    </source>
</evidence>
<name>HEM1_CHLT2</name>
<reference key="1">
    <citation type="journal article" date="2008" name="Genome Res.">
        <title>Chlamydia trachomatis: genome sequence analysis of lymphogranuloma venereum isolates.</title>
        <authorList>
            <person name="Thomson N.R."/>
            <person name="Holden M.T.G."/>
            <person name="Carder C."/>
            <person name="Lennard N."/>
            <person name="Lockey S.J."/>
            <person name="Marsh P."/>
            <person name="Skipp P."/>
            <person name="O'Connor C.D."/>
            <person name="Goodhead I."/>
            <person name="Norbertzcak H."/>
            <person name="Harris B."/>
            <person name="Ormond D."/>
            <person name="Rance R."/>
            <person name="Quail M.A."/>
            <person name="Parkhill J."/>
            <person name="Stephens R.S."/>
            <person name="Clarke I.N."/>
        </authorList>
    </citation>
    <scope>NUCLEOTIDE SEQUENCE [LARGE SCALE GENOMIC DNA]</scope>
    <source>
        <strain>ATCC VR-902B / DSM 19102 / 434/Bu</strain>
    </source>
</reference>
<dbReference type="EC" id="1.2.1.70" evidence="1"/>
<dbReference type="EMBL" id="AM884176">
    <property type="protein sequence ID" value="CAP03475.1"/>
    <property type="molecule type" value="Genomic_DNA"/>
</dbReference>
<dbReference type="RefSeq" id="WP_009873277.1">
    <property type="nucleotide sequence ID" value="NC_010287.1"/>
</dbReference>
<dbReference type="RefSeq" id="YP_001654122.1">
    <property type="nucleotide sequence ID" value="NC_010287.1"/>
</dbReference>
<dbReference type="SMR" id="B0B8N8"/>
<dbReference type="KEGG" id="ctb:CTL0031"/>
<dbReference type="PATRIC" id="fig|471472.4.peg.34"/>
<dbReference type="HOGENOM" id="CLU_035113_3_1_0"/>
<dbReference type="UniPathway" id="UPA00251">
    <property type="reaction ID" value="UER00316"/>
</dbReference>
<dbReference type="Proteomes" id="UP001154402">
    <property type="component" value="Chromosome"/>
</dbReference>
<dbReference type="GO" id="GO:0008883">
    <property type="term" value="F:glutamyl-tRNA reductase activity"/>
    <property type="evidence" value="ECO:0007669"/>
    <property type="project" value="UniProtKB-UniRule"/>
</dbReference>
<dbReference type="GO" id="GO:0050661">
    <property type="term" value="F:NADP binding"/>
    <property type="evidence" value="ECO:0007669"/>
    <property type="project" value="InterPro"/>
</dbReference>
<dbReference type="GO" id="GO:0006782">
    <property type="term" value="P:protoporphyrinogen IX biosynthetic process"/>
    <property type="evidence" value="ECO:0007669"/>
    <property type="project" value="UniProtKB-UniRule"/>
</dbReference>
<dbReference type="Gene3D" id="3.30.460.30">
    <property type="entry name" value="Glutamyl-tRNA reductase, N-terminal domain"/>
    <property type="match status" value="1"/>
</dbReference>
<dbReference type="HAMAP" id="MF_00087">
    <property type="entry name" value="Glu_tRNA_reductase"/>
    <property type="match status" value="1"/>
</dbReference>
<dbReference type="InterPro" id="IPR000343">
    <property type="entry name" value="4pyrrol_synth_GluRdtase"/>
</dbReference>
<dbReference type="InterPro" id="IPR015895">
    <property type="entry name" value="4pyrrol_synth_GluRdtase_N"/>
</dbReference>
<dbReference type="InterPro" id="IPR018214">
    <property type="entry name" value="GluRdtase_CS"/>
</dbReference>
<dbReference type="InterPro" id="IPR036343">
    <property type="entry name" value="GluRdtase_N_sf"/>
</dbReference>
<dbReference type="NCBIfam" id="NF001909">
    <property type="entry name" value="PRK00676.1"/>
    <property type="match status" value="1"/>
</dbReference>
<dbReference type="PANTHER" id="PTHR43120">
    <property type="entry name" value="GLUTAMYL-TRNA REDUCTASE 1, CHLOROPLASTIC"/>
    <property type="match status" value="1"/>
</dbReference>
<dbReference type="PANTHER" id="PTHR43120:SF1">
    <property type="entry name" value="GLUTAMYL-TRNA REDUCTASE 1, CHLOROPLASTIC"/>
    <property type="match status" value="1"/>
</dbReference>
<dbReference type="Pfam" id="PF05201">
    <property type="entry name" value="GlutR_N"/>
    <property type="match status" value="1"/>
</dbReference>
<dbReference type="SUPFAM" id="SSF69742">
    <property type="entry name" value="Glutamyl tRNA-reductase catalytic, N-terminal domain"/>
    <property type="match status" value="1"/>
</dbReference>
<dbReference type="PROSITE" id="PS00747">
    <property type="entry name" value="GLUTR"/>
    <property type="match status" value="1"/>
</dbReference>
<feature type="chain" id="PRO_1000093124" description="Glutamyl-tRNA reductase">
    <location>
        <begin position="1"/>
        <end position="335"/>
    </location>
</feature>
<feature type="active site" description="Nucleophile" evidence="1">
    <location>
        <position position="61"/>
    </location>
</feature>
<feature type="binding site" evidence="1">
    <location>
        <begin position="60"/>
        <end position="63"/>
    </location>
    <ligand>
        <name>substrate</name>
    </ligand>
</feature>
<feature type="binding site" evidence="1">
    <location>
        <position position="110"/>
    </location>
    <ligand>
        <name>substrate</name>
    </ligand>
</feature>
<feature type="binding site" evidence="1">
    <location>
        <begin position="115"/>
        <end position="117"/>
    </location>
    <ligand>
        <name>substrate</name>
    </ligand>
</feature>
<feature type="binding site" evidence="1">
    <location>
        <position position="121"/>
    </location>
    <ligand>
        <name>substrate</name>
    </ligand>
</feature>
<feature type="binding site" evidence="1">
    <location>
        <begin position="189"/>
        <end position="194"/>
    </location>
    <ligand>
        <name>NADP(+)</name>
        <dbReference type="ChEBI" id="CHEBI:58349"/>
    </ligand>
</feature>
<feature type="site" description="Important for activity" evidence="1">
    <location>
        <position position="100"/>
    </location>
</feature>
<comment type="function">
    <text evidence="1">Catalyzes the NADPH-dependent reduction of glutamyl-tRNA(Glu) to glutamate 1-semialdehyde (GSA).</text>
</comment>
<comment type="catalytic activity">
    <reaction evidence="1">
        <text>(S)-4-amino-5-oxopentanoate + tRNA(Glu) + NADP(+) = L-glutamyl-tRNA(Glu) + NADPH + H(+)</text>
        <dbReference type="Rhea" id="RHEA:12344"/>
        <dbReference type="Rhea" id="RHEA-COMP:9663"/>
        <dbReference type="Rhea" id="RHEA-COMP:9680"/>
        <dbReference type="ChEBI" id="CHEBI:15378"/>
        <dbReference type="ChEBI" id="CHEBI:57501"/>
        <dbReference type="ChEBI" id="CHEBI:57783"/>
        <dbReference type="ChEBI" id="CHEBI:58349"/>
        <dbReference type="ChEBI" id="CHEBI:78442"/>
        <dbReference type="ChEBI" id="CHEBI:78520"/>
        <dbReference type="EC" id="1.2.1.70"/>
    </reaction>
</comment>
<comment type="pathway">
    <text evidence="1">Porphyrin-containing compound metabolism; protoporphyrin-IX biosynthesis; 5-aminolevulinate from L-glutamyl-tRNA(Glu): step 1/2.</text>
</comment>
<comment type="subunit">
    <text evidence="1">Homodimer.</text>
</comment>
<comment type="domain">
    <text evidence="1">Possesses an unusual extended V-shaped dimeric structure with each monomer consisting of three distinct domains arranged along a curved 'spinal' alpha-helix. The N-terminal catalytic domain specifically recognizes the glutamate moiety of the substrate. The second domain is the NADPH-binding domain, and the third C-terminal domain is responsible for dimerization.</text>
</comment>
<comment type="miscellaneous">
    <text evidence="1">During catalysis, the active site Cys acts as a nucleophile attacking the alpha-carbonyl group of tRNA-bound glutamate with the formation of a thioester intermediate between enzyme and glutamate, and the concomitant release of tRNA(Glu). The thioester intermediate is finally reduced by direct hydride transfer from NADPH, to form the product GSA.</text>
</comment>
<comment type="similarity">
    <text evidence="1">Belongs to the glutamyl-tRNA reductase family.</text>
</comment>